<organism>
    <name type="scientific">Escherichia coli (strain K12)</name>
    <dbReference type="NCBI Taxonomy" id="83333"/>
    <lineage>
        <taxon>Bacteria</taxon>
        <taxon>Pseudomonadati</taxon>
        <taxon>Pseudomonadota</taxon>
        <taxon>Gammaproteobacteria</taxon>
        <taxon>Enterobacterales</taxon>
        <taxon>Enterobacteriaceae</taxon>
        <taxon>Escherichia</taxon>
    </lineage>
</organism>
<sequence length="326" mass="37851">MSHQLTFADSEFSSKRRQTRKEIFLSRMEQILPWQNMVEVIEPFYPKAGNGRRPYPLETMLRIHCMQHWYNLSDGAMEDALYEIASMRLFARLSLDSALPDRTTIMNFRHLLEQHQLARQLFKTINRWLAEAGVMMTQGTLVDATIIEAPSSTKNKEQQRDPEMHQTKKGNQWHFGMKAHIGVDAKSGLTHSLVTTAANEHDLNQLGNLLHGEEQFVSADAGYQGAPQREELAEVDVDWLIAERPGKVRTLKQHPRKNKTAINIEYMKASIRARVEHPFRIIKRQFGFVKARYKGLLKNDNQLAMLFTLANLFRADQMIRQWERSH</sequence>
<comment type="function">
    <text>Involved in the transposition of the insertion sequence IS5.</text>
</comment>
<comment type="similarity">
    <text evidence="1">Belongs to the transposase 11 family.</text>
</comment>
<comment type="sequence caution" evidence="1">
    <conflict type="erroneous initiation">
        <sequence resource="EMBL-CDS" id="AAB08679"/>
    </conflict>
    <text>Extended N-terminus.</text>
</comment>
<comment type="sequence caution" evidence="1">
    <conflict type="erroneous initiation">
        <sequence resource="EMBL-CDS" id="BAE76049"/>
    </conflict>
    <text>Extended N-terminus.</text>
</comment>
<keyword id="KW-0233">DNA recombination</keyword>
<keyword id="KW-0238">DNA-binding</keyword>
<keyword id="KW-1185">Reference proteome</keyword>
<keyword id="KW-0814">Transposable element</keyword>
<keyword id="KW-0815">Transposition</keyword>
<accession>P0CE49</accession>
<accession>O07987</accession>
<accession>O07988</accession>
<accession>P03837</accession>
<accession>P76355</accession>
<accession>Q2MBK1</accession>
<accession>Q2MBM8</accession>
<protein>
    <recommendedName>
        <fullName>Transposase InsH for insertion sequence element IS5A</fullName>
    </recommendedName>
</protein>
<dbReference type="EMBL" id="J01734">
    <property type="status" value="NOT_ANNOTATED_CDS"/>
    <property type="molecule type" value="Genomic_DNA"/>
</dbReference>
<dbReference type="EMBL" id="U70214">
    <property type="protein sequence ID" value="AAB08679.1"/>
    <property type="status" value="ALT_INIT"/>
    <property type="molecule type" value="Genomic_DNA"/>
</dbReference>
<dbReference type="EMBL" id="U00096">
    <property type="protein sequence ID" value="AAC73362.2"/>
    <property type="molecule type" value="Genomic_DNA"/>
</dbReference>
<dbReference type="EMBL" id="AP009048">
    <property type="protein sequence ID" value="BAE76049.1"/>
    <property type="status" value="ALT_INIT"/>
    <property type="molecule type" value="Genomic_DNA"/>
</dbReference>
<dbReference type="PIR" id="A64964">
    <property type="entry name" value="A64964"/>
</dbReference>
<dbReference type="PIR" id="A91483">
    <property type="entry name" value="IEEC5D"/>
</dbReference>
<dbReference type="RefSeq" id="NP_414793.1">
    <property type="nucleotide sequence ID" value="NC_000913.3"/>
</dbReference>
<dbReference type="RefSeq" id="NP_415084.1">
    <property type="nucleotide sequence ID" value="NC_000913.3"/>
</dbReference>
<dbReference type="RefSeq" id="NP_415189.1">
    <property type="nucleotide sequence ID" value="NC_000913.3"/>
</dbReference>
<dbReference type="RefSeq" id="NP_415847.1">
    <property type="nucleotide sequence ID" value="NC_000913.3"/>
</dbReference>
<dbReference type="RefSeq" id="NP_416535.1">
    <property type="nucleotide sequence ID" value="NC_000913.3"/>
</dbReference>
<dbReference type="RefSeq" id="NP_416696.1">
    <property type="nucleotide sequence ID" value="NC_000913.3"/>
</dbReference>
<dbReference type="RefSeq" id="NP_417456.1">
    <property type="nucleotide sequence ID" value="NC_000913.3"/>
</dbReference>
<dbReference type="RefSeq" id="NP_417685.1">
    <property type="nucleotide sequence ID" value="NC_000913.3"/>
</dbReference>
<dbReference type="RefSeq" id="NP_417962.1">
    <property type="nucleotide sequence ID" value="NC_000913.3"/>
</dbReference>
<dbReference type="RefSeq" id="WP_000019403.1">
    <property type="nucleotide sequence ID" value="NZ_SSZK01000120.1"/>
</dbReference>
<dbReference type="FunCoup" id="P0CE49">
    <property type="interactions" value="15"/>
</dbReference>
<dbReference type="jPOST" id="P0CE49"/>
<dbReference type="EnsemblBacteria" id="AAC73362">
    <property type="protein sequence ID" value="AAC73362"/>
    <property type="gene ID" value="b0259"/>
</dbReference>
<dbReference type="GeneID" id="944941"/>
<dbReference type="KEGG" id="ecj:JW0250"/>
<dbReference type="KEGG" id="eco:b0259"/>
<dbReference type="KEGG" id="eco:b0552"/>
<dbReference type="KEGG" id="eco:b0656"/>
<dbReference type="KEGG" id="eco:b2030"/>
<dbReference type="KEGG" id="eco:b2192"/>
<dbReference type="KEGG" id="eco:b2982"/>
<dbReference type="KEGG" id="eco:b3218"/>
<dbReference type="KEGG" id="eco:b3505"/>
<dbReference type="KEGG" id="eco:b4711"/>
<dbReference type="KEGG" id="ecoc:C3026_01250"/>
<dbReference type="KEGG" id="ecoc:C3026_02730"/>
<dbReference type="KEGG" id="ecoc:C3026_03280"/>
<dbReference type="KEGG" id="ecoc:C3026_07795"/>
<dbReference type="KEGG" id="ecoc:C3026_10760"/>
<dbReference type="KEGG" id="ecoc:C3026_11440"/>
<dbReference type="KEGG" id="ecoc:C3026_12250"/>
<dbReference type="KEGG" id="ecoc:C3026_16315"/>
<dbReference type="KEGG" id="ecoc:C3026_17505"/>
<dbReference type="KEGG" id="ecoc:C3026_18985"/>
<dbReference type="KEGG" id="ecoc:C3026_23975"/>
<dbReference type="EchoBASE" id="EB4704"/>
<dbReference type="HOGENOM" id="CLU_049873_1_2_6"/>
<dbReference type="InParanoid" id="P0CE49"/>
<dbReference type="PhylomeDB" id="P0CE49"/>
<dbReference type="BioCyc" id="EcoCyc:G7769-MONOMER"/>
<dbReference type="PRO" id="PR:P0CE49"/>
<dbReference type="Proteomes" id="UP000000625">
    <property type="component" value="Chromosome"/>
</dbReference>
<dbReference type="GO" id="GO:0005829">
    <property type="term" value="C:cytosol"/>
    <property type="evidence" value="ECO:0000318"/>
    <property type="project" value="GO_Central"/>
</dbReference>
<dbReference type="GO" id="GO:0003677">
    <property type="term" value="F:DNA binding"/>
    <property type="evidence" value="ECO:0007669"/>
    <property type="project" value="UniProtKB-KW"/>
</dbReference>
<dbReference type="GO" id="GO:0004803">
    <property type="term" value="F:transposase activity"/>
    <property type="evidence" value="ECO:0000318"/>
    <property type="project" value="GO_Central"/>
</dbReference>
<dbReference type="GO" id="GO:0006313">
    <property type="term" value="P:DNA transposition"/>
    <property type="evidence" value="ECO:0000318"/>
    <property type="project" value="GO_Central"/>
</dbReference>
<dbReference type="InterPro" id="IPR047959">
    <property type="entry name" value="Transpos_IS5"/>
</dbReference>
<dbReference type="InterPro" id="IPR002559">
    <property type="entry name" value="Transposase_11"/>
</dbReference>
<dbReference type="InterPro" id="IPR008490">
    <property type="entry name" value="Transposase_InsH_N"/>
</dbReference>
<dbReference type="NCBIfam" id="NF033581">
    <property type="entry name" value="transpos_IS5_4"/>
    <property type="match status" value="1"/>
</dbReference>
<dbReference type="PANTHER" id="PTHR35604">
    <property type="entry name" value="TRANSPOSASE INSH FOR INSERTION SEQUENCE ELEMENT IS5A-RELATED"/>
    <property type="match status" value="1"/>
</dbReference>
<dbReference type="PANTHER" id="PTHR35604:SF2">
    <property type="entry name" value="TRANSPOSASE INSH FOR INSERTION SEQUENCE ELEMENT IS5A-RELATED"/>
    <property type="match status" value="1"/>
</dbReference>
<dbReference type="Pfam" id="PF01609">
    <property type="entry name" value="DDE_Tnp_1"/>
    <property type="match status" value="1"/>
</dbReference>
<dbReference type="Pfam" id="PF05598">
    <property type="entry name" value="DUF772"/>
    <property type="match status" value="1"/>
</dbReference>
<gene>
    <name type="primary">insH1</name>
    <name type="ordered locus">b0259</name>
    <name type="ordered locus">JW0250</name>
</gene>
<feature type="chain" id="PRO_0000173292" description="Transposase InsH for insertion sequence element IS5A">
    <location>
        <begin position="1"/>
        <end position="326"/>
    </location>
</feature>
<name>INSH1_ECOLI</name>
<evidence type="ECO:0000305" key="1"/>
<reference key="1">
    <citation type="journal article" date="1981" name="Gene">
        <title>The nucleotide sequence of IS5 from Escherichia coli.</title>
        <authorList>
            <person name="Schoner B."/>
            <person name="Kahn M."/>
        </authorList>
    </citation>
    <scope>NUCLEOTIDE SEQUENCE [GENOMIC DNA]</scope>
</reference>
<reference key="2">
    <citation type="journal article" date="1981" name="Gene">
        <title>The nucleotide sequence and protein-coding capability of the transposable element IS5.</title>
        <authorList>
            <person name="Engler J.A."/>
            <person name="van Bree M.P."/>
        </authorList>
    </citation>
    <scope>NUCLEOTIDE SEQUENCE [GENOMIC DNA]</scope>
</reference>
<reference key="3">
    <citation type="journal article" date="1994" name="Nucleic Acids Res.">
        <title>Analysis of the Escherichia coli genome. V. DNA sequence of the region from 76.0 to 81.5 minutes.</title>
        <authorList>
            <person name="Sofia H.J."/>
            <person name="Burland V."/>
            <person name="Daniels D.L."/>
            <person name="Plunkett G. III"/>
            <person name="Blattner F.R."/>
        </authorList>
    </citation>
    <scope>NUCLEOTIDE SEQUENCE [LARGE SCALE GENOMIC DNA]</scope>
    <source>
        <strain>K12 / MG1655 / ATCC 47076</strain>
    </source>
</reference>
<reference key="4">
    <citation type="journal article" date="1996" name="DNA Res.">
        <title>A 570-kb DNA sequence of the Escherichia coli K-12 genome corresponding to the 28.0-40.1 min region on the linkage map.</title>
        <authorList>
            <person name="Aiba H."/>
            <person name="Baba T."/>
            <person name="Fujita K."/>
            <person name="Hayashi K."/>
            <person name="Inada T."/>
            <person name="Isono K."/>
            <person name="Itoh T."/>
            <person name="Kasai H."/>
            <person name="Kashimoto K."/>
            <person name="Kimura S."/>
            <person name="Kitakawa M."/>
            <person name="Kitagawa M."/>
            <person name="Makino K."/>
            <person name="Miki T."/>
            <person name="Mizobuchi K."/>
            <person name="Mori H."/>
            <person name="Mori T."/>
            <person name="Motomura K."/>
            <person name="Nakade S."/>
            <person name="Nakamura Y."/>
            <person name="Nashimoto H."/>
            <person name="Nishio Y."/>
            <person name="Oshima T."/>
            <person name="Saito N."/>
            <person name="Sampei G."/>
            <person name="Seki Y."/>
            <person name="Sivasundaram S."/>
            <person name="Tagami H."/>
            <person name="Takeda J."/>
            <person name="Takemoto K."/>
            <person name="Takeuchi Y."/>
            <person name="Wada C."/>
            <person name="Yamamoto Y."/>
            <person name="Horiuchi T."/>
        </authorList>
    </citation>
    <scope>NUCLEOTIDE SEQUENCE [LARGE SCALE GENOMIC DNA]</scope>
    <source>
        <strain>K12 / W3110 / ATCC 27325 / DSM 5911</strain>
    </source>
</reference>
<reference key="5">
    <citation type="journal article" date="1996" name="DNA Res.">
        <title>A 460-kb DNA sequence of the Escherichia coli K-12 genome corresponding to the 40.1-50.0 min region on the linkage map.</title>
        <authorList>
            <person name="Itoh T."/>
            <person name="Aiba H."/>
            <person name="Baba T."/>
            <person name="Fujita K."/>
            <person name="Hayashi K."/>
            <person name="Inada T."/>
            <person name="Isono K."/>
            <person name="Kasai H."/>
            <person name="Kimura S."/>
            <person name="Kitakawa M."/>
            <person name="Kitagawa M."/>
            <person name="Makino K."/>
            <person name="Miki T."/>
            <person name="Mizobuchi K."/>
            <person name="Mori H."/>
            <person name="Mori T."/>
            <person name="Motomura K."/>
            <person name="Nakade S."/>
            <person name="Nakamura Y."/>
            <person name="Nashimoto H."/>
            <person name="Nishio Y."/>
            <person name="Oshima T."/>
            <person name="Saito N."/>
            <person name="Sampei G."/>
            <person name="Seki Y."/>
            <person name="Sivasundaram S."/>
            <person name="Tagami H."/>
            <person name="Takeda J."/>
            <person name="Takemoto K."/>
            <person name="Wada C."/>
            <person name="Yamamoto Y."/>
            <person name="Horiuchi T."/>
        </authorList>
    </citation>
    <scope>NUCLEOTIDE SEQUENCE [LARGE SCALE GENOMIC DNA]</scope>
    <source>
        <strain>K12 / W3110 / ATCC 27325 / DSM 5911</strain>
    </source>
</reference>
<reference key="6">
    <citation type="submission" date="1997-01" db="EMBL/GenBank/DDBJ databases">
        <title>Sequence of minutes 4-25 of Escherichia coli.</title>
        <authorList>
            <person name="Chung E."/>
            <person name="Allen E."/>
            <person name="Araujo R."/>
            <person name="Aparicio A.M."/>
            <person name="Davis K."/>
            <person name="Duncan M."/>
            <person name="Federspiel N."/>
            <person name="Hyman R."/>
            <person name="Kalman S."/>
            <person name="Komp C."/>
            <person name="Kurdi O."/>
            <person name="Lew H."/>
            <person name="Lin D."/>
            <person name="Namath A."/>
            <person name="Oefner P."/>
            <person name="Roberts D."/>
            <person name="Schramm S."/>
            <person name="Davis R.W."/>
        </authorList>
    </citation>
    <scope>NUCLEOTIDE SEQUENCE [LARGE SCALE GENOMIC DNA]</scope>
    <source>
        <strain>K12 / MG1655 / ATCC 47076</strain>
    </source>
</reference>
<reference key="7">
    <citation type="journal article" date="1997" name="Science">
        <title>The complete genome sequence of Escherichia coli K-12.</title>
        <authorList>
            <person name="Blattner F.R."/>
            <person name="Plunkett G. III"/>
            <person name="Bloch C.A."/>
            <person name="Perna N.T."/>
            <person name="Burland V."/>
            <person name="Riley M."/>
            <person name="Collado-Vides J."/>
            <person name="Glasner J.D."/>
            <person name="Rode C.K."/>
            <person name="Mayhew G.F."/>
            <person name="Gregor J."/>
            <person name="Davis N.W."/>
            <person name="Kirkpatrick H.A."/>
            <person name="Goeden M.A."/>
            <person name="Rose D.J."/>
            <person name="Mau B."/>
            <person name="Shao Y."/>
        </authorList>
    </citation>
    <scope>NUCLEOTIDE SEQUENCE [LARGE SCALE GENOMIC DNA]</scope>
    <source>
        <strain>K12 / MG1655 / ATCC 47076</strain>
    </source>
</reference>
<reference key="8">
    <citation type="journal article" date="2006" name="Mol. Syst. Biol.">
        <title>Highly accurate genome sequences of Escherichia coli K-12 strains MG1655 and W3110.</title>
        <authorList>
            <person name="Hayashi K."/>
            <person name="Morooka N."/>
            <person name="Yamamoto Y."/>
            <person name="Fujita K."/>
            <person name="Isono K."/>
            <person name="Choi S."/>
            <person name="Ohtsubo E."/>
            <person name="Baba T."/>
            <person name="Wanner B.L."/>
            <person name="Mori H."/>
            <person name="Horiuchi T."/>
        </authorList>
    </citation>
    <scope>NUCLEOTIDE SEQUENCE [LARGE SCALE GENOMIC DNA]</scope>
    <source>
        <strain>K12 / W3110 / ATCC 27325 / DSM 5911</strain>
    </source>
</reference>
<proteinExistence type="inferred from homology"/>